<reference key="1">
    <citation type="journal article" date="2008" name="J. Biotechnol.">
        <title>The genome of Xanthomonas campestris pv. campestris B100 and its use for the reconstruction of metabolic pathways involved in xanthan biosynthesis.</title>
        <authorList>
            <person name="Vorhoelter F.-J."/>
            <person name="Schneiker S."/>
            <person name="Goesmann A."/>
            <person name="Krause L."/>
            <person name="Bekel T."/>
            <person name="Kaiser O."/>
            <person name="Linke B."/>
            <person name="Patschkowski T."/>
            <person name="Rueckert C."/>
            <person name="Schmid J."/>
            <person name="Sidhu V.K."/>
            <person name="Sieber V."/>
            <person name="Tauch A."/>
            <person name="Watt S.A."/>
            <person name="Weisshaar B."/>
            <person name="Becker A."/>
            <person name="Niehaus K."/>
            <person name="Puehler A."/>
        </authorList>
    </citation>
    <scope>NUCLEOTIDE SEQUENCE [LARGE SCALE GENOMIC DNA]</scope>
    <source>
        <strain>B100</strain>
    </source>
</reference>
<organism>
    <name type="scientific">Xanthomonas campestris pv. campestris (strain B100)</name>
    <dbReference type="NCBI Taxonomy" id="509169"/>
    <lineage>
        <taxon>Bacteria</taxon>
        <taxon>Pseudomonadati</taxon>
        <taxon>Pseudomonadota</taxon>
        <taxon>Gammaproteobacteria</taxon>
        <taxon>Lysobacterales</taxon>
        <taxon>Lysobacteraceae</taxon>
        <taxon>Xanthomonas</taxon>
    </lineage>
</organism>
<feature type="chain" id="PRO_1000134221" description="ATP synthase gamma chain">
    <location>
        <begin position="1"/>
        <end position="287"/>
    </location>
</feature>
<accession>B0RWC3</accession>
<name>ATPG_XANCB</name>
<protein>
    <recommendedName>
        <fullName evidence="1">ATP synthase gamma chain</fullName>
    </recommendedName>
    <alternativeName>
        <fullName evidence="1">ATP synthase F1 sector gamma subunit</fullName>
    </alternativeName>
    <alternativeName>
        <fullName evidence="1">F-ATPase gamma subunit</fullName>
    </alternativeName>
</protein>
<evidence type="ECO:0000255" key="1">
    <source>
        <dbReference type="HAMAP-Rule" id="MF_00815"/>
    </source>
</evidence>
<dbReference type="EMBL" id="AM920689">
    <property type="protein sequence ID" value="CAP53162.1"/>
    <property type="molecule type" value="Genomic_DNA"/>
</dbReference>
<dbReference type="SMR" id="B0RWC3"/>
<dbReference type="KEGG" id="xca:xcc-b100_3795"/>
<dbReference type="HOGENOM" id="CLU_050669_0_1_6"/>
<dbReference type="Proteomes" id="UP000001188">
    <property type="component" value="Chromosome"/>
</dbReference>
<dbReference type="GO" id="GO:0005886">
    <property type="term" value="C:plasma membrane"/>
    <property type="evidence" value="ECO:0007669"/>
    <property type="project" value="UniProtKB-SubCell"/>
</dbReference>
<dbReference type="GO" id="GO:0045259">
    <property type="term" value="C:proton-transporting ATP synthase complex"/>
    <property type="evidence" value="ECO:0007669"/>
    <property type="project" value="UniProtKB-KW"/>
</dbReference>
<dbReference type="GO" id="GO:0005524">
    <property type="term" value="F:ATP binding"/>
    <property type="evidence" value="ECO:0007669"/>
    <property type="project" value="UniProtKB-UniRule"/>
</dbReference>
<dbReference type="GO" id="GO:0046933">
    <property type="term" value="F:proton-transporting ATP synthase activity, rotational mechanism"/>
    <property type="evidence" value="ECO:0007669"/>
    <property type="project" value="UniProtKB-UniRule"/>
</dbReference>
<dbReference type="GO" id="GO:0042777">
    <property type="term" value="P:proton motive force-driven plasma membrane ATP synthesis"/>
    <property type="evidence" value="ECO:0007669"/>
    <property type="project" value="UniProtKB-UniRule"/>
</dbReference>
<dbReference type="CDD" id="cd12151">
    <property type="entry name" value="F1-ATPase_gamma"/>
    <property type="match status" value="1"/>
</dbReference>
<dbReference type="FunFam" id="1.10.287.80:FF:000005">
    <property type="entry name" value="ATP synthase gamma chain"/>
    <property type="match status" value="1"/>
</dbReference>
<dbReference type="FunFam" id="3.40.1380.10:FF:000007">
    <property type="entry name" value="ATP synthase gamma chain"/>
    <property type="match status" value="1"/>
</dbReference>
<dbReference type="Gene3D" id="3.40.1380.10">
    <property type="match status" value="1"/>
</dbReference>
<dbReference type="Gene3D" id="1.10.287.80">
    <property type="entry name" value="ATP synthase, gamma subunit, helix hairpin domain"/>
    <property type="match status" value="1"/>
</dbReference>
<dbReference type="HAMAP" id="MF_00815">
    <property type="entry name" value="ATP_synth_gamma_bact"/>
    <property type="match status" value="1"/>
</dbReference>
<dbReference type="InterPro" id="IPR035968">
    <property type="entry name" value="ATP_synth_F1_ATPase_gsu"/>
</dbReference>
<dbReference type="InterPro" id="IPR000131">
    <property type="entry name" value="ATP_synth_F1_gsu"/>
</dbReference>
<dbReference type="InterPro" id="IPR023632">
    <property type="entry name" value="ATP_synth_F1_gsu_CS"/>
</dbReference>
<dbReference type="NCBIfam" id="TIGR01146">
    <property type="entry name" value="ATPsyn_F1gamma"/>
    <property type="match status" value="1"/>
</dbReference>
<dbReference type="NCBIfam" id="NF004144">
    <property type="entry name" value="PRK05621.1-1"/>
    <property type="match status" value="1"/>
</dbReference>
<dbReference type="PANTHER" id="PTHR11693">
    <property type="entry name" value="ATP SYNTHASE GAMMA CHAIN"/>
    <property type="match status" value="1"/>
</dbReference>
<dbReference type="PANTHER" id="PTHR11693:SF22">
    <property type="entry name" value="ATP SYNTHASE SUBUNIT GAMMA, MITOCHONDRIAL"/>
    <property type="match status" value="1"/>
</dbReference>
<dbReference type="Pfam" id="PF00231">
    <property type="entry name" value="ATP-synt"/>
    <property type="match status" value="1"/>
</dbReference>
<dbReference type="PRINTS" id="PR00126">
    <property type="entry name" value="ATPASEGAMMA"/>
</dbReference>
<dbReference type="SUPFAM" id="SSF52943">
    <property type="entry name" value="ATP synthase (F1-ATPase), gamma subunit"/>
    <property type="match status" value="1"/>
</dbReference>
<dbReference type="PROSITE" id="PS00153">
    <property type="entry name" value="ATPASE_GAMMA"/>
    <property type="match status" value="1"/>
</dbReference>
<gene>
    <name evidence="1" type="primary">atpG</name>
    <name type="ordered locus">xcc-b100_3795</name>
</gene>
<proteinExistence type="inferred from homology"/>
<sequence length="287" mass="32025">MAGGREIKTKIKSVQNTRKVTRALEMVSASKIRKAQERMKTSRPYAQAMKQVIGHLAQASTDYQHPFLVEREQVKRVGYIVISSDRGLAGGLNNNLFRKMLGEVRPWQDKGAEIDVVTIGQKASAFFRRIKVNMVGSVTHLGDSPHIEQLVGVIKVMLDAFTEGKVDRVYLVYNRFVNTMTQKASFEQLLPLPAAEHKVAHHDWDYLYEPDAATVLEHVMTRYIESLVYQAVLENVASEHAARMVAMKAASDNANKMIGTLQLVYNKARQAAITQEISEIVSGAAAV</sequence>
<keyword id="KW-0066">ATP synthesis</keyword>
<keyword id="KW-0997">Cell inner membrane</keyword>
<keyword id="KW-1003">Cell membrane</keyword>
<keyword id="KW-0139">CF(1)</keyword>
<keyword id="KW-0375">Hydrogen ion transport</keyword>
<keyword id="KW-0406">Ion transport</keyword>
<keyword id="KW-0472">Membrane</keyword>
<keyword id="KW-0813">Transport</keyword>
<comment type="function">
    <text evidence="1">Produces ATP from ADP in the presence of a proton gradient across the membrane. The gamma chain is believed to be important in regulating ATPase activity and the flow of protons through the CF(0) complex.</text>
</comment>
<comment type="subunit">
    <text evidence="1">F-type ATPases have 2 components, CF(1) - the catalytic core - and CF(0) - the membrane proton channel. CF(1) has five subunits: alpha(3), beta(3), gamma(1), delta(1), epsilon(1). CF(0) has three main subunits: a, b and c.</text>
</comment>
<comment type="subcellular location">
    <subcellularLocation>
        <location evidence="1">Cell inner membrane</location>
        <topology evidence="1">Peripheral membrane protein</topology>
    </subcellularLocation>
</comment>
<comment type="similarity">
    <text evidence="1">Belongs to the ATPase gamma chain family.</text>
</comment>